<organism>
    <name type="scientific">Escherichia coli (strain SE11)</name>
    <dbReference type="NCBI Taxonomy" id="409438"/>
    <lineage>
        <taxon>Bacteria</taxon>
        <taxon>Pseudomonadati</taxon>
        <taxon>Pseudomonadota</taxon>
        <taxon>Gammaproteobacteria</taxon>
        <taxon>Enterobacterales</taxon>
        <taxon>Enterobacteriaceae</taxon>
        <taxon>Escherichia</taxon>
    </lineage>
</organism>
<evidence type="ECO:0000255" key="1">
    <source>
        <dbReference type="HAMAP-Rule" id="MF_01128"/>
    </source>
</evidence>
<gene>
    <name evidence="1" type="primary">clcA</name>
    <name evidence="1" type="synonym">eriC</name>
    <name type="ordered locus">ECSE_0156</name>
</gene>
<keyword id="KW-0050">Antiport</keyword>
<keyword id="KW-0997">Cell inner membrane</keyword>
<keyword id="KW-1003">Cell membrane</keyword>
<keyword id="KW-0868">Chloride</keyword>
<keyword id="KW-0406">Ion transport</keyword>
<keyword id="KW-0472">Membrane</keyword>
<keyword id="KW-0812">Transmembrane</keyword>
<keyword id="KW-1133">Transmembrane helix</keyword>
<keyword id="KW-0813">Transport</keyword>
<proteinExistence type="inferred from homology"/>
<reference key="1">
    <citation type="journal article" date="2008" name="DNA Res.">
        <title>Complete genome sequence and comparative analysis of the wild-type commensal Escherichia coli strain SE11 isolated from a healthy adult.</title>
        <authorList>
            <person name="Oshima K."/>
            <person name="Toh H."/>
            <person name="Ogura Y."/>
            <person name="Sasamoto H."/>
            <person name="Morita H."/>
            <person name="Park S.-H."/>
            <person name="Ooka T."/>
            <person name="Iyoda S."/>
            <person name="Taylor T.D."/>
            <person name="Hayashi T."/>
            <person name="Itoh K."/>
            <person name="Hattori M."/>
        </authorList>
    </citation>
    <scope>NUCLEOTIDE SEQUENCE [LARGE SCALE GENOMIC DNA]</scope>
    <source>
        <strain>SE11</strain>
    </source>
</reference>
<accession>B6HZD1</accession>
<feature type="chain" id="PRO_1000137299" description="H(+)/Cl(-) exchange transporter ClcA">
    <location>
        <begin position="1"/>
        <end position="473"/>
    </location>
</feature>
<feature type="topological domain" description="Cytoplasmic" evidence="1">
    <location>
        <begin position="1"/>
        <end position="32"/>
    </location>
</feature>
<feature type="transmembrane region" description="Helical" evidence="1">
    <location>
        <begin position="33"/>
        <end position="69"/>
    </location>
</feature>
<feature type="topological domain" description="Periplasmic" evidence="1">
    <location>
        <begin position="70"/>
        <end position="76"/>
    </location>
</feature>
<feature type="transmembrane region" description="Helical" evidence="1">
    <location>
        <begin position="77"/>
        <end position="100"/>
    </location>
</feature>
<feature type="intramembrane region" description="Helical" evidence="1">
    <location>
        <begin position="109"/>
        <end position="116"/>
    </location>
</feature>
<feature type="topological domain" description="Cytoplasmic" evidence="1">
    <location>
        <begin position="117"/>
        <end position="123"/>
    </location>
</feature>
<feature type="transmembrane region" description="Helical" evidence="1">
    <location>
        <begin position="124"/>
        <end position="141"/>
    </location>
</feature>
<feature type="transmembrane region" description="Helical" evidence="1">
    <location>
        <begin position="148"/>
        <end position="166"/>
    </location>
</feature>
<feature type="topological domain" description="Cytoplasmic" evidence="1">
    <location>
        <begin position="167"/>
        <end position="176"/>
    </location>
</feature>
<feature type="intramembrane region" description="Helical" evidence="1">
    <location>
        <begin position="177"/>
        <end position="189"/>
    </location>
</feature>
<feature type="intramembrane region" description="Helical" evidence="1">
    <location>
        <begin position="193"/>
        <end position="201"/>
    </location>
</feature>
<feature type="topological domain" description="Cytoplasmic" evidence="1">
    <location>
        <begin position="202"/>
        <end position="214"/>
    </location>
</feature>
<feature type="transmembrane region" description="Helical" evidence="1">
    <location>
        <begin position="215"/>
        <end position="232"/>
    </location>
</feature>
<feature type="topological domain" description="Periplasmic" evidence="1">
    <location>
        <begin position="233"/>
        <end position="252"/>
    </location>
</feature>
<feature type="transmembrane region" description="Helical" evidence="1">
    <location>
        <begin position="253"/>
        <end position="281"/>
    </location>
</feature>
<feature type="topological domain" description="Cytoplasmic" evidence="1">
    <location>
        <begin position="282"/>
        <end position="287"/>
    </location>
</feature>
<feature type="transmembrane region" description="Helical" evidence="1">
    <location>
        <begin position="288"/>
        <end position="309"/>
    </location>
</feature>
<feature type="topological domain" description="Periplasmic" evidence="1">
    <location>
        <begin position="310"/>
        <end position="329"/>
    </location>
</feature>
<feature type="transmembrane region" description="Helical" evidence="1">
    <location>
        <begin position="330"/>
        <end position="349"/>
    </location>
</feature>
<feature type="transmembrane region" description="Helical" evidence="1">
    <location>
        <begin position="355"/>
        <end position="376"/>
    </location>
</feature>
<feature type="topological domain" description="Periplasmic" evidence="1">
    <location>
        <begin position="377"/>
        <end position="386"/>
    </location>
</feature>
<feature type="intramembrane region" description="Helical" evidence="1">
    <location>
        <begin position="387"/>
        <end position="401"/>
    </location>
</feature>
<feature type="intramembrane region" description="Note=Loop between two helices" evidence="1">
    <location>
        <begin position="402"/>
        <end position="404"/>
    </location>
</feature>
<feature type="intramembrane region" description="Helical" evidence="1">
    <location>
        <begin position="405"/>
        <end position="416"/>
    </location>
</feature>
<feature type="intramembrane region" description="Note=Loop between two helices" evidence="1">
    <location>
        <begin position="417"/>
        <end position="421"/>
    </location>
</feature>
<feature type="transmembrane region" description="Helical" evidence="1">
    <location>
        <begin position="422"/>
        <end position="438"/>
    </location>
</feature>
<feature type="topological domain" description="Cytoplasmic" evidence="1">
    <location>
        <begin position="439"/>
        <end position="473"/>
    </location>
</feature>
<feature type="short sequence motif" description="Selectivity filter part_1" evidence="1">
    <location>
        <begin position="106"/>
        <end position="110"/>
    </location>
</feature>
<feature type="short sequence motif" description="Selectivity filter part_2" evidence="1">
    <location>
        <begin position="146"/>
        <end position="150"/>
    </location>
</feature>
<feature type="short sequence motif" description="Selectivity filter part_3" evidence="1">
    <location>
        <begin position="355"/>
        <end position="359"/>
    </location>
</feature>
<feature type="binding site" evidence="1">
    <location>
        <position position="107"/>
    </location>
    <ligand>
        <name>chloride</name>
        <dbReference type="ChEBI" id="CHEBI:17996"/>
    </ligand>
</feature>
<feature type="binding site" evidence="1">
    <location>
        <position position="356"/>
    </location>
    <ligand>
        <name>chloride</name>
        <dbReference type="ChEBI" id="CHEBI:17996"/>
    </ligand>
</feature>
<feature type="binding site" evidence="1">
    <location>
        <position position="357"/>
    </location>
    <ligand>
        <name>chloride</name>
        <dbReference type="ChEBI" id="CHEBI:17996"/>
    </ligand>
</feature>
<feature type="binding site" evidence="1">
    <location>
        <position position="445"/>
    </location>
    <ligand>
        <name>chloride</name>
        <dbReference type="ChEBI" id="CHEBI:17996"/>
    </ligand>
</feature>
<feature type="site" description="Mediates proton transfer from the outer aqueous phase to the interior of the protein; involved in linking H(+) and Cl(-) transport" evidence="1">
    <location>
        <position position="148"/>
    </location>
</feature>
<feature type="site" description="Mediates proton transfer from the protein to the inner aqueous phase" evidence="1">
    <location>
        <position position="203"/>
    </location>
</feature>
<comment type="function">
    <text evidence="1">Proton-coupled chloride transporter. Functions as antiport system and exchanges two chloride ions for 1 proton. Probably acts as an electrical shunt for an outwardly-directed proton pump that is linked to amino acid decarboxylation, as part of the extreme acid resistance (XAR) response.</text>
</comment>
<comment type="catalytic activity">
    <reaction evidence="1">
        <text>2 chloride(in) + H(+)(out) = 2 chloride(out) + H(+)(in)</text>
        <dbReference type="Rhea" id="RHEA:29567"/>
        <dbReference type="ChEBI" id="CHEBI:15378"/>
        <dbReference type="ChEBI" id="CHEBI:17996"/>
    </reaction>
</comment>
<comment type="subunit">
    <text evidence="1">Homodimer.</text>
</comment>
<comment type="subcellular location">
    <subcellularLocation>
        <location evidence="1">Cell inner membrane</location>
        <topology evidence="1">Multi-pass membrane protein</topology>
    </subcellularLocation>
</comment>
<comment type="similarity">
    <text evidence="1">Belongs to the chloride channel (TC 2.A.49) family. ClcA subfamily.</text>
</comment>
<name>CLCA_ECOSE</name>
<protein>
    <recommendedName>
        <fullName evidence="1">H(+)/Cl(-) exchange transporter ClcA</fullName>
    </recommendedName>
</protein>
<sequence length="473" mass="50349">MKTDTPSLETPQAARLRRRQLIRQLLERDKTPLAILFMAAVVGTLVGLAAVAFDKGVAWLQNQRMGALVHTADNYPLLLTVAFLCSAVLAMFGYFLVRKYAPEAGGSGIPEIEGALEDQRPVRWWRVLPVKFFGGLGTLGGGMVLGREGPTVQIGGNIGRMVLDIFRLKGDEARHTLLATGAAAGLAAAFNAPLAGILFIIEEMRPQFRYTLISIKAVFIGVIMSTIMYRIFNHEVALIDVGKLSDAPLNTLWLYLILGIIFGIFGPIFNKWVLGMQDLLHRVHGGNITKWVLMGGAIGGLCGLLGFVAPATSGGGFNLIPIATAGNFSMGMLVFIFVARVITTLLCFSSGAPGGIFAPMLALGTVLGTAFGMVAVELFPQYHLEAGTFAIAGMGALLAASIRAPLTGIILVLEMTDNYQLILPMIITGLGATLLAQFTGGKPLYSAILARTLAKQEAEQLARSKAASASENT</sequence>
<dbReference type="EMBL" id="AP009240">
    <property type="protein sequence ID" value="BAG75680.1"/>
    <property type="molecule type" value="Genomic_DNA"/>
</dbReference>
<dbReference type="RefSeq" id="WP_000845394.1">
    <property type="nucleotide sequence ID" value="NC_011415.1"/>
</dbReference>
<dbReference type="SMR" id="B6HZD1"/>
<dbReference type="GeneID" id="93777272"/>
<dbReference type="KEGG" id="ecy:ECSE_0156"/>
<dbReference type="HOGENOM" id="CLU_015263_7_0_6"/>
<dbReference type="Proteomes" id="UP000008199">
    <property type="component" value="Chromosome"/>
</dbReference>
<dbReference type="GO" id="GO:0005886">
    <property type="term" value="C:plasma membrane"/>
    <property type="evidence" value="ECO:0007669"/>
    <property type="project" value="UniProtKB-SubCell"/>
</dbReference>
<dbReference type="GO" id="GO:0015297">
    <property type="term" value="F:antiporter activity"/>
    <property type="evidence" value="ECO:0007669"/>
    <property type="project" value="UniProtKB-UniRule"/>
</dbReference>
<dbReference type="GO" id="GO:0005247">
    <property type="term" value="F:voltage-gated chloride channel activity"/>
    <property type="evidence" value="ECO:0007669"/>
    <property type="project" value="TreeGrafter"/>
</dbReference>
<dbReference type="CDD" id="cd01031">
    <property type="entry name" value="EriC"/>
    <property type="match status" value="1"/>
</dbReference>
<dbReference type="FunFam" id="1.10.3080.10:FF:000005">
    <property type="entry name" value="H(+)/Cl(-) exchange transporter ClcA"/>
    <property type="match status" value="1"/>
</dbReference>
<dbReference type="Gene3D" id="1.10.3080.10">
    <property type="entry name" value="Clc chloride channel"/>
    <property type="match status" value="1"/>
</dbReference>
<dbReference type="HAMAP" id="MF_01128">
    <property type="entry name" value="CLC_ClcA"/>
    <property type="match status" value="1"/>
</dbReference>
<dbReference type="InterPro" id="IPR023861">
    <property type="entry name" value="Cl-channel_ClcA"/>
</dbReference>
<dbReference type="InterPro" id="IPR014743">
    <property type="entry name" value="Cl-channel_core"/>
</dbReference>
<dbReference type="InterPro" id="IPR001807">
    <property type="entry name" value="ClC"/>
</dbReference>
<dbReference type="NCBIfam" id="NF003640">
    <property type="entry name" value="PRK05277.1"/>
    <property type="match status" value="1"/>
</dbReference>
<dbReference type="PANTHER" id="PTHR45711">
    <property type="entry name" value="CHLORIDE CHANNEL PROTEIN"/>
    <property type="match status" value="1"/>
</dbReference>
<dbReference type="PANTHER" id="PTHR45711:SF6">
    <property type="entry name" value="CHLORIDE CHANNEL PROTEIN"/>
    <property type="match status" value="1"/>
</dbReference>
<dbReference type="Pfam" id="PF00654">
    <property type="entry name" value="Voltage_CLC"/>
    <property type="match status" value="1"/>
</dbReference>
<dbReference type="PRINTS" id="PR00762">
    <property type="entry name" value="CLCHANNEL"/>
</dbReference>
<dbReference type="SUPFAM" id="SSF81340">
    <property type="entry name" value="Clc chloride channel"/>
    <property type="match status" value="1"/>
</dbReference>